<comment type="function">
    <text>FABPs are thought to play a role in the intracellular transport of long-chain fatty acids and their acyl-CoA esters.</text>
</comment>
<comment type="subcellular location">
    <subcellularLocation>
        <location>Cytoplasm</location>
    </subcellularLocation>
</comment>
<comment type="domain">
    <text evidence="1">Forms a beta-barrel structure that accommodates the hydrophobic ligand in its interior.</text>
</comment>
<comment type="similarity">
    <text evidence="3">Belongs to the calycin superfamily. Fatty-acid binding protein (FABP) family.</text>
</comment>
<reference key="1">
    <citation type="journal article" date="1994" name="Dev. Biol.">
        <title>Thyroid hormone-dependent regulation of the intestinal fatty acid-binding protein gene during amphibian metamorphosis.</title>
        <authorList>
            <person name="Shi Y.B."/>
            <person name="Hayes W.P."/>
        </authorList>
    </citation>
    <scope>NUCLEOTIDE SEQUENCE [MRNA]</scope>
    <source>
        <tissue>Intestine</tissue>
    </source>
</reference>
<dbReference type="EMBL" id="L19946">
    <property type="protein sequence ID" value="AAC38012.1"/>
    <property type="molecule type" value="mRNA"/>
</dbReference>
<dbReference type="PIR" id="I51450">
    <property type="entry name" value="I51450"/>
</dbReference>
<dbReference type="RefSeq" id="NP_001079346.1">
    <property type="nucleotide sequence ID" value="NM_001085877.1"/>
</dbReference>
<dbReference type="SMR" id="Q91775"/>
<dbReference type="GeneID" id="378690"/>
<dbReference type="KEGG" id="xla:378690"/>
<dbReference type="AGR" id="Xenbase:XB-GENE-864901"/>
<dbReference type="CTD" id="378690"/>
<dbReference type="Xenbase" id="XB-GENE-864901">
    <property type="gene designation" value="fabp2.L"/>
</dbReference>
<dbReference type="OMA" id="FMEAMGV"/>
<dbReference type="OrthoDB" id="9991853at2759"/>
<dbReference type="Proteomes" id="UP000186698">
    <property type="component" value="Chromosome 1L"/>
</dbReference>
<dbReference type="Bgee" id="378690">
    <property type="expression patterns" value="Expressed in intestine and 9 other cell types or tissues"/>
</dbReference>
<dbReference type="GO" id="GO:0005829">
    <property type="term" value="C:cytosol"/>
    <property type="evidence" value="ECO:0000318"/>
    <property type="project" value="GO_Central"/>
</dbReference>
<dbReference type="GO" id="GO:0005634">
    <property type="term" value="C:nucleus"/>
    <property type="evidence" value="ECO:0000318"/>
    <property type="project" value="GO_Central"/>
</dbReference>
<dbReference type="GO" id="GO:0036041">
    <property type="term" value="F:long-chain fatty acid binding"/>
    <property type="evidence" value="ECO:0000318"/>
    <property type="project" value="GO_Central"/>
</dbReference>
<dbReference type="GO" id="GO:0015908">
    <property type="term" value="P:fatty acid transport"/>
    <property type="evidence" value="ECO:0000318"/>
    <property type="project" value="GO_Central"/>
</dbReference>
<dbReference type="CDD" id="cd19445">
    <property type="entry name" value="FABP2"/>
    <property type="match status" value="1"/>
</dbReference>
<dbReference type="FunFam" id="2.40.128.20:FF:000001">
    <property type="entry name" value="Fatty acid-binding protein, adipocyte"/>
    <property type="match status" value="1"/>
</dbReference>
<dbReference type="Gene3D" id="2.40.128.20">
    <property type="match status" value="1"/>
</dbReference>
<dbReference type="InterPro" id="IPR012674">
    <property type="entry name" value="Calycin"/>
</dbReference>
<dbReference type="InterPro" id="IPR031272">
    <property type="entry name" value="FABP2"/>
</dbReference>
<dbReference type="InterPro" id="IPR000463">
    <property type="entry name" value="Fatty_acid-bd"/>
</dbReference>
<dbReference type="InterPro" id="IPR031259">
    <property type="entry name" value="ILBP"/>
</dbReference>
<dbReference type="InterPro" id="IPR000566">
    <property type="entry name" value="Lipocln_cytosolic_FA-bd_dom"/>
</dbReference>
<dbReference type="PANTHER" id="PTHR11955">
    <property type="entry name" value="FATTY ACID BINDING PROTEIN"/>
    <property type="match status" value="1"/>
</dbReference>
<dbReference type="Pfam" id="PF00061">
    <property type="entry name" value="Lipocalin"/>
    <property type="match status" value="1"/>
</dbReference>
<dbReference type="PRINTS" id="PR00178">
    <property type="entry name" value="FATTYACIDBP"/>
</dbReference>
<dbReference type="SUPFAM" id="SSF50814">
    <property type="entry name" value="Lipocalins"/>
    <property type="match status" value="1"/>
</dbReference>
<dbReference type="PROSITE" id="PS00214">
    <property type="entry name" value="FABP"/>
    <property type="match status" value="1"/>
</dbReference>
<sequence length="132" mass="15252">MAFDGTWKVDRSENYEKFMEVMGVNIVKRKLGAHDNLKVIIQQDGNNFTVKESSTFRNIEIKFTLAQPFEYSLADGTELNGAWFLQDNQLLGTFTRKDNGKVLQTTRQIIGDELVQTYEYEGTESKRIFKRG</sequence>
<feature type="initiator methionine" description="Removed" evidence="1">
    <location>
        <position position="1"/>
    </location>
</feature>
<feature type="chain" id="PRO_0000067331" description="Fatty acid-binding protein, intestinal">
    <location>
        <begin position="2"/>
        <end position="132"/>
    </location>
</feature>
<feature type="binding site" evidence="2">
    <location>
        <position position="83"/>
    </location>
    <ligand>
        <name>hexadecanoate</name>
        <dbReference type="ChEBI" id="CHEBI:7896"/>
    </ligand>
</feature>
<feature type="binding site" evidence="2">
    <location>
        <position position="83"/>
    </location>
    <ligand>
        <name>tetradecanoate</name>
        <dbReference type="ChEBI" id="CHEBI:30807"/>
    </ligand>
</feature>
<feature type="binding site" evidence="2">
    <location>
        <position position="107"/>
    </location>
    <ligand>
        <name>hexadecanoate</name>
        <dbReference type="ChEBI" id="CHEBI:7896"/>
    </ligand>
</feature>
<feature type="binding site" evidence="2">
    <location>
        <position position="107"/>
    </location>
    <ligand>
        <name>tetradecanoate</name>
        <dbReference type="ChEBI" id="CHEBI:30807"/>
    </ligand>
</feature>
<feature type="modified residue" description="N-acetylalanine" evidence="1">
    <location>
        <position position="2"/>
    </location>
</feature>
<gene>
    <name type="primary">fabp2</name>
</gene>
<proteinExistence type="evidence at transcript level"/>
<name>FABPI_XENLA</name>
<accession>Q91775</accession>
<keyword id="KW-0007">Acetylation</keyword>
<keyword id="KW-0963">Cytoplasm</keyword>
<keyword id="KW-0446">Lipid-binding</keyword>
<keyword id="KW-1185">Reference proteome</keyword>
<keyword id="KW-0813">Transport</keyword>
<organism>
    <name type="scientific">Xenopus laevis</name>
    <name type="common">African clawed frog</name>
    <dbReference type="NCBI Taxonomy" id="8355"/>
    <lineage>
        <taxon>Eukaryota</taxon>
        <taxon>Metazoa</taxon>
        <taxon>Chordata</taxon>
        <taxon>Craniata</taxon>
        <taxon>Vertebrata</taxon>
        <taxon>Euteleostomi</taxon>
        <taxon>Amphibia</taxon>
        <taxon>Batrachia</taxon>
        <taxon>Anura</taxon>
        <taxon>Pipoidea</taxon>
        <taxon>Pipidae</taxon>
        <taxon>Xenopodinae</taxon>
        <taxon>Xenopus</taxon>
        <taxon>Xenopus</taxon>
    </lineage>
</organism>
<protein>
    <recommendedName>
        <fullName>Fatty acid-binding protein, intestinal</fullName>
    </recommendedName>
    <alternativeName>
        <fullName>Fatty acid-binding protein 2</fullName>
    </alternativeName>
    <alternativeName>
        <fullName>Intestinal-type fatty acid-binding protein</fullName>
        <shortName>I-FABP</shortName>
    </alternativeName>
</protein>
<evidence type="ECO:0000250" key="1"/>
<evidence type="ECO:0000250" key="2">
    <source>
        <dbReference type="UniProtKB" id="P02693"/>
    </source>
</evidence>
<evidence type="ECO:0000305" key="3"/>